<reference key="1">
    <citation type="journal article" date="2011" name="MBio">
        <title>Novel metabolic attributes of the genus Cyanothece, comprising a group of unicellular nitrogen-fixing Cyanobacteria.</title>
        <authorList>
            <person name="Bandyopadhyay A."/>
            <person name="Elvitigala T."/>
            <person name="Welsh E."/>
            <person name="Stockel J."/>
            <person name="Liberton M."/>
            <person name="Min H."/>
            <person name="Sherman L.A."/>
            <person name="Pakrasi H.B."/>
        </authorList>
    </citation>
    <scope>NUCLEOTIDE SEQUENCE [LARGE SCALE GENOMIC DNA]</scope>
    <source>
        <strain>PCC 7424</strain>
    </source>
</reference>
<protein>
    <recommendedName>
        <fullName evidence="1">Large ribosomal subunit protein uL18</fullName>
    </recommendedName>
    <alternativeName>
        <fullName evidence="3">50S ribosomal protein L18</fullName>
    </alternativeName>
</protein>
<evidence type="ECO:0000255" key="1">
    <source>
        <dbReference type="HAMAP-Rule" id="MF_01337"/>
    </source>
</evidence>
<evidence type="ECO:0000256" key="2">
    <source>
        <dbReference type="SAM" id="MobiDB-lite"/>
    </source>
</evidence>
<evidence type="ECO:0000305" key="3"/>
<dbReference type="EMBL" id="CP001291">
    <property type="protein sequence ID" value="ACK72099.1"/>
    <property type="molecule type" value="Genomic_DNA"/>
</dbReference>
<dbReference type="RefSeq" id="WP_015955692.1">
    <property type="nucleotide sequence ID" value="NC_011729.1"/>
</dbReference>
<dbReference type="SMR" id="B7KI02"/>
<dbReference type="STRING" id="65393.PCC7424_3718"/>
<dbReference type="KEGG" id="cyc:PCC7424_3718"/>
<dbReference type="eggNOG" id="COG0256">
    <property type="taxonomic scope" value="Bacteria"/>
</dbReference>
<dbReference type="HOGENOM" id="CLU_098841_0_1_3"/>
<dbReference type="OrthoDB" id="9810939at2"/>
<dbReference type="Proteomes" id="UP000002384">
    <property type="component" value="Chromosome"/>
</dbReference>
<dbReference type="GO" id="GO:0022625">
    <property type="term" value="C:cytosolic large ribosomal subunit"/>
    <property type="evidence" value="ECO:0007669"/>
    <property type="project" value="TreeGrafter"/>
</dbReference>
<dbReference type="GO" id="GO:0008097">
    <property type="term" value="F:5S rRNA binding"/>
    <property type="evidence" value="ECO:0007669"/>
    <property type="project" value="TreeGrafter"/>
</dbReference>
<dbReference type="GO" id="GO:0003735">
    <property type="term" value="F:structural constituent of ribosome"/>
    <property type="evidence" value="ECO:0007669"/>
    <property type="project" value="InterPro"/>
</dbReference>
<dbReference type="GO" id="GO:0006412">
    <property type="term" value="P:translation"/>
    <property type="evidence" value="ECO:0007669"/>
    <property type="project" value="UniProtKB-UniRule"/>
</dbReference>
<dbReference type="CDD" id="cd00432">
    <property type="entry name" value="Ribosomal_L18_L5e"/>
    <property type="match status" value="1"/>
</dbReference>
<dbReference type="FunFam" id="3.30.420.100:FF:000001">
    <property type="entry name" value="50S ribosomal protein L18"/>
    <property type="match status" value="1"/>
</dbReference>
<dbReference type="Gene3D" id="3.30.420.100">
    <property type="match status" value="1"/>
</dbReference>
<dbReference type="HAMAP" id="MF_01337_B">
    <property type="entry name" value="Ribosomal_uL18_B"/>
    <property type="match status" value="1"/>
</dbReference>
<dbReference type="InterPro" id="IPR004389">
    <property type="entry name" value="Ribosomal_uL18_bac-type"/>
</dbReference>
<dbReference type="InterPro" id="IPR005484">
    <property type="entry name" value="Ribosomal_uL18_bac/euk"/>
</dbReference>
<dbReference type="NCBIfam" id="TIGR00060">
    <property type="entry name" value="L18_bact"/>
    <property type="match status" value="1"/>
</dbReference>
<dbReference type="PANTHER" id="PTHR12899">
    <property type="entry name" value="39S RIBOSOMAL PROTEIN L18, MITOCHONDRIAL"/>
    <property type="match status" value="1"/>
</dbReference>
<dbReference type="PANTHER" id="PTHR12899:SF3">
    <property type="entry name" value="LARGE RIBOSOMAL SUBUNIT PROTEIN UL18M"/>
    <property type="match status" value="1"/>
</dbReference>
<dbReference type="Pfam" id="PF00861">
    <property type="entry name" value="Ribosomal_L18p"/>
    <property type="match status" value="1"/>
</dbReference>
<dbReference type="SUPFAM" id="SSF53137">
    <property type="entry name" value="Translational machinery components"/>
    <property type="match status" value="1"/>
</dbReference>
<name>RL18_GLOC7</name>
<accession>B7KI02</accession>
<proteinExistence type="inferred from homology"/>
<sequence>MKRTRTESVQRRHSRIRRKVEGTPSRPRLAVFRSNNHIYAQVIDDVAQHTLVAASTLDKDLKGEFSSGATCEASEAVGKLVAQRALAKGIEKVVFDRGGNLYHGRIRALAQAAREAGLDF</sequence>
<organism>
    <name type="scientific">Gloeothece citriformis (strain PCC 7424)</name>
    <name type="common">Cyanothece sp. (strain PCC 7424)</name>
    <dbReference type="NCBI Taxonomy" id="65393"/>
    <lineage>
        <taxon>Bacteria</taxon>
        <taxon>Bacillati</taxon>
        <taxon>Cyanobacteriota</taxon>
        <taxon>Cyanophyceae</taxon>
        <taxon>Oscillatoriophycideae</taxon>
        <taxon>Chroococcales</taxon>
        <taxon>Aphanothecaceae</taxon>
        <taxon>Gloeothece</taxon>
        <taxon>Gloeothece citriformis</taxon>
    </lineage>
</organism>
<gene>
    <name evidence="1" type="primary">rplR</name>
    <name evidence="1" type="synonym">rpl18</name>
    <name type="ordered locus">PCC7424_3718</name>
</gene>
<keyword id="KW-1185">Reference proteome</keyword>
<keyword id="KW-0687">Ribonucleoprotein</keyword>
<keyword id="KW-0689">Ribosomal protein</keyword>
<keyword id="KW-0694">RNA-binding</keyword>
<keyword id="KW-0699">rRNA-binding</keyword>
<comment type="function">
    <text evidence="1">This is one of the proteins that bind and probably mediate the attachment of the 5S RNA into the large ribosomal subunit, where it forms part of the central protuberance.</text>
</comment>
<comment type="subunit">
    <text evidence="1">Part of the 50S ribosomal subunit; part of the 5S rRNA/L5/L18/L25 subcomplex. Contacts the 5S and 23S rRNAs.</text>
</comment>
<comment type="similarity">
    <text evidence="1">Belongs to the universal ribosomal protein uL18 family.</text>
</comment>
<feature type="chain" id="PRO_1000142649" description="Large ribosomal subunit protein uL18">
    <location>
        <begin position="1"/>
        <end position="120"/>
    </location>
</feature>
<feature type="region of interest" description="Disordered" evidence="2">
    <location>
        <begin position="1"/>
        <end position="24"/>
    </location>
</feature>
<feature type="compositionally biased region" description="Basic and acidic residues" evidence="2">
    <location>
        <begin position="1"/>
        <end position="10"/>
    </location>
</feature>